<sequence>MNLIPRTSIVVYLKHMKHERQIRKYGHIVHSNRDRKFVIMYVNEQDVDQIVHKLMQLKYVRHIDGSPYKYLKKTYEKEKHEIYN</sequence>
<keyword id="KW-0963">Cytoplasm</keyword>
<evidence type="ECO:0000255" key="1">
    <source>
        <dbReference type="HAMAP-Rule" id="MF_01126"/>
    </source>
</evidence>
<comment type="subcellular location">
    <subcellularLocation>
        <location evidence="1">Cytoplasm</location>
    </subcellularLocation>
</comment>
<comment type="similarity">
    <text evidence="1">Belongs to the UPF0298 family.</text>
</comment>
<gene>
    <name type="ordered locus">MW1004</name>
</gene>
<name>Y1004_STAAW</name>
<dbReference type="EMBL" id="BA000033">
    <property type="protein sequence ID" value="BAB94869.1"/>
    <property type="molecule type" value="Genomic_DNA"/>
</dbReference>
<dbReference type="RefSeq" id="WP_001049150.1">
    <property type="nucleotide sequence ID" value="NC_003923.1"/>
</dbReference>
<dbReference type="SMR" id="P60418"/>
<dbReference type="KEGG" id="sam:MW1004"/>
<dbReference type="HOGENOM" id="CLU_159890_2_1_9"/>
<dbReference type="GO" id="GO:0005737">
    <property type="term" value="C:cytoplasm"/>
    <property type="evidence" value="ECO:0007669"/>
    <property type="project" value="UniProtKB-SubCell"/>
</dbReference>
<dbReference type="HAMAP" id="MF_01126">
    <property type="entry name" value="UPF0298"/>
    <property type="match status" value="1"/>
</dbReference>
<dbReference type="InterPro" id="IPR016979">
    <property type="entry name" value="DUF2129"/>
</dbReference>
<dbReference type="Pfam" id="PF09902">
    <property type="entry name" value="DUF2129"/>
    <property type="match status" value="1"/>
</dbReference>
<dbReference type="PIRSF" id="PIRSF031653">
    <property type="entry name" value="UCP031653"/>
    <property type="match status" value="1"/>
</dbReference>
<feature type="chain" id="PRO_0000074669" description="UPF0298 protein MW1004">
    <location>
        <begin position="1"/>
        <end position="84"/>
    </location>
</feature>
<reference key="1">
    <citation type="journal article" date="2002" name="Lancet">
        <title>Genome and virulence determinants of high virulence community-acquired MRSA.</title>
        <authorList>
            <person name="Baba T."/>
            <person name="Takeuchi F."/>
            <person name="Kuroda M."/>
            <person name="Yuzawa H."/>
            <person name="Aoki K."/>
            <person name="Oguchi A."/>
            <person name="Nagai Y."/>
            <person name="Iwama N."/>
            <person name="Asano K."/>
            <person name="Naimi T."/>
            <person name="Kuroda H."/>
            <person name="Cui L."/>
            <person name="Yamamoto K."/>
            <person name="Hiramatsu K."/>
        </authorList>
    </citation>
    <scope>NUCLEOTIDE SEQUENCE [LARGE SCALE GENOMIC DNA]</scope>
    <source>
        <strain>MW2</strain>
    </source>
</reference>
<proteinExistence type="inferred from homology"/>
<organism>
    <name type="scientific">Staphylococcus aureus (strain MW2)</name>
    <dbReference type="NCBI Taxonomy" id="196620"/>
    <lineage>
        <taxon>Bacteria</taxon>
        <taxon>Bacillati</taxon>
        <taxon>Bacillota</taxon>
        <taxon>Bacilli</taxon>
        <taxon>Bacillales</taxon>
        <taxon>Staphylococcaceae</taxon>
        <taxon>Staphylococcus</taxon>
    </lineage>
</organism>
<protein>
    <recommendedName>
        <fullName evidence="1">UPF0298 protein MW1004</fullName>
    </recommendedName>
</protein>
<accession>P60418</accession>
<accession>Q99UY2</accession>